<gene>
    <name type="primary">trpC</name>
    <name type="ordered locus">HI_1389.1</name>
</gene>
<feature type="chain" id="PRO_0000154279" description="Tryptophan biosynthesis protein TrpCF">
    <location>
        <begin position="1"/>
        <end position="477"/>
    </location>
</feature>
<feature type="region of interest" description="Indole-3-glycerol phosphate synthase">
    <location>
        <begin position="13"/>
        <end position="275"/>
    </location>
</feature>
<feature type="region of interest" description="N-(5'-phosphoribosyl)anthranilate isomerase">
    <location>
        <begin position="276"/>
        <end position="477"/>
    </location>
</feature>
<name>TRPC_HAEIN</name>
<sequence>MMITQDFTKPIDSATVLQKIVLDKAQWVKAKEKEFPLSQFKQNIQNSDRSFYDALAKGTHQKPAYILECKKASPSKGLIRAEFNLEEIANVYKHYASAVSVLTDEKYFQGNFEFLPLVRDIVSQPVLCKDFMISEYQVYLARYYQVDAILLMLSVVNDETYRVLADLAHSLGMGVLTETSNEEEFERALALGAKIIGVNNRNLHDLTVDLNRVVELTKKYADCIPADVRIISESGIYNHKQIHQLQKVAHGFLIGSSLMGNQDLNNAVRSVIFGENKVCGLTRAQDVKIVYENGALYGGLIFAEHSKRSVSLRQAQELVTAAPLRFVGVFQNQEIDFIVKIASQLQLYAVQLHGAETEAFITALRQQLPKNTQIWKAISVNTEAQSAVDFTDDLNVDRYIFDSQTANQQGGTGKTFDWSLIPENLKHKIILAGGISPNNVEQAIAQGCLGLDLNSGVESSAGVKDQEKVRLVFNNIY</sequence>
<dbReference type="EC" id="4.1.1.48"/>
<dbReference type="EC" id="5.3.1.24"/>
<dbReference type="EMBL" id="L42023">
    <property type="protein sequence ID" value="AAC23036.1"/>
    <property type="molecule type" value="Genomic_DNA"/>
</dbReference>
<dbReference type="RefSeq" id="NP_439543.1">
    <property type="nucleotide sequence ID" value="NC_000907.1"/>
</dbReference>
<dbReference type="SMR" id="P46451"/>
<dbReference type="STRING" id="71421.HI_1389.1"/>
<dbReference type="EnsemblBacteria" id="AAC23036">
    <property type="protein sequence ID" value="AAC23036"/>
    <property type="gene ID" value="HI_1389.1"/>
</dbReference>
<dbReference type="KEGG" id="hin:HI_1389.1"/>
<dbReference type="PATRIC" id="fig|71421.8.peg.1448"/>
<dbReference type="eggNOG" id="COG0134">
    <property type="taxonomic scope" value="Bacteria"/>
</dbReference>
<dbReference type="eggNOG" id="COG0135">
    <property type="taxonomic scope" value="Bacteria"/>
</dbReference>
<dbReference type="HOGENOM" id="CLU_007713_1_2_6"/>
<dbReference type="OrthoDB" id="9804217at2"/>
<dbReference type="PhylomeDB" id="P46451"/>
<dbReference type="BioCyc" id="HINF71421:G1GJ1-1417-MONOMER"/>
<dbReference type="UniPathway" id="UPA00035">
    <property type="reaction ID" value="UER00042"/>
</dbReference>
<dbReference type="UniPathway" id="UPA00035">
    <property type="reaction ID" value="UER00043"/>
</dbReference>
<dbReference type="Proteomes" id="UP000000579">
    <property type="component" value="Chromosome"/>
</dbReference>
<dbReference type="GO" id="GO:0004425">
    <property type="term" value="F:indole-3-glycerol-phosphate synthase activity"/>
    <property type="evidence" value="ECO:0000318"/>
    <property type="project" value="GO_Central"/>
</dbReference>
<dbReference type="GO" id="GO:0004640">
    <property type="term" value="F:phosphoribosylanthranilate isomerase activity"/>
    <property type="evidence" value="ECO:0000318"/>
    <property type="project" value="GO_Central"/>
</dbReference>
<dbReference type="GO" id="GO:0000162">
    <property type="term" value="P:L-tryptophan biosynthetic process"/>
    <property type="evidence" value="ECO:0000318"/>
    <property type="project" value="GO_Central"/>
</dbReference>
<dbReference type="CDD" id="cd00331">
    <property type="entry name" value="IGPS"/>
    <property type="match status" value="1"/>
</dbReference>
<dbReference type="CDD" id="cd00405">
    <property type="entry name" value="PRAI"/>
    <property type="match status" value="1"/>
</dbReference>
<dbReference type="FunFam" id="3.20.20.70:FF:000024">
    <property type="entry name" value="Indole-3-glycerol phosphate synthase"/>
    <property type="match status" value="1"/>
</dbReference>
<dbReference type="FunFam" id="3.20.20.70:FF:000165">
    <property type="entry name" value="Multifunctional fusion protein"/>
    <property type="match status" value="1"/>
</dbReference>
<dbReference type="Gene3D" id="3.20.20.70">
    <property type="entry name" value="Aldolase class I"/>
    <property type="match status" value="2"/>
</dbReference>
<dbReference type="HAMAP" id="MF_00134_B">
    <property type="entry name" value="IGPS_B"/>
    <property type="match status" value="1"/>
</dbReference>
<dbReference type="HAMAP" id="MF_00135">
    <property type="entry name" value="PRAI"/>
    <property type="match status" value="1"/>
</dbReference>
<dbReference type="InterPro" id="IPR013785">
    <property type="entry name" value="Aldolase_TIM"/>
</dbReference>
<dbReference type="InterPro" id="IPR045186">
    <property type="entry name" value="Indole-3-glycerol_P_synth"/>
</dbReference>
<dbReference type="InterPro" id="IPR013798">
    <property type="entry name" value="Indole-3-glycerol_P_synth_dom"/>
</dbReference>
<dbReference type="InterPro" id="IPR001468">
    <property type="entry name" value="Indole-3-GlycerolPSynthase_CS"/>
</dbReference>
<dbReference type="InterPro" id="IPR001240">
    <property type="entry name" value="PRAI_dom"/>
</dbReference>
<dbReference type="InterPro" id="IPR011060">
    <property type="entry name" value="RibuloseP-bd_barrel"/>
</dbReference>
<dbReference type="NCBIfam" id="NF006945">
    <property type="entry name" value="PRK09427.1"/>
    <property type="match status" value="1"/>
</dbReference>
<dbReference type="PANTHER" id="PTHR22854:SF2">
    <property type="entry name" value="INDOLE-3-GLYCEROL-PHOSPHATE SYNTHASE"/>
    <property type="match status" value="1"/>
</dbReference>
<dbReference type="PANTHER" id="PTHR22854">
    <property type="entry name" value="TRYPTOPHAN BIOSYNTHESIS PROTEIN"/>
    <property type="match status" value="1"/>
</dbReference>
<dbReference type="Pfam" id="PF00218">
    <property type="entry name" value="IGPS"/>
    <property type="match status" value="1"/>
</dbReference>
<dbReference type="Pfam" id="PF00697">
    <property type="entry name" value="PRAI"/>
    <property type="match status" value="1"/>
</dbReference>
<dbReference type="SUPFAM" id="SSF51366">
    <property type="entry name" value="Ribulose-phoshate binding barrel"/>
    <property type="match status" value="2"/>
</dbReference>
<dbReference type="PROSITE" id="PS00614">
    <property type="entry name" value="IGPS"/>
    <property type="match status" value="1"/>
</dbReference>
<protein>
    <recommendedName>
        <fullName>Tryptophan biosynthesis protein TrpCF</fullName>
    </recommendedName>
    <domain>
        <recommendedName>
            <fullName>Indole-3-glycerol phosphate synthase</fullName>
            <shortName>IGPS</shortName>
            <ecNumber>4.1.1.48</ecNumber>
        </recommendedName>
    </domain>
    <domain>
        <recommendedName>
            <fullName>N-(5'-phospho-ribosyl)anthranilate isomerase</fullName>
            <shortName>PRAI</shortName>
            <ecNumber>5.3.1.24</ecNumber>
        </recommendedName>
    </domain>
</protein>
<proteinExistence type="inferred from homology"/>
<evidence type="ECO:0000250" key="1"/>
<evidence type="ECO:0000305" key="2"/>
<accession>P46451</accession>
<organism>
    <name type="scientific">Haemophilus influenzae (strain ATCC 51907 / DSM 11121 / KW20 / Rd)</name>
    <dbReference type="NCBI Taxonomy" id="71421"/>
    <lineage>
        <taxon>Bacteria</taxon>
        <taxon>Pseudomonadati</taxon>
        <taxon>Pseudomonadota</taxon>
        <taxon>Gammaproteobacteria</taxon>
        <taxon>Pasteurellales</taxon>
        <taxon>Pasteurellaceae</taxon>
        <taxon>Haemophilus</taxon>
    </lineage>
</organism>
<keyword id="KW-0028">Amino-acid biosynthesis</keyword>
<keyword id="KW-0057">Aromatic amino acid biosynthesis</keyword>
<keyword id="KW-0210">Decarboxylase</keyword>
<keyword id="KW-0413">Isomerase</keyword>
<keyword id="KW-0456">Lyase</keyword>
<keyword id="KW-0511">Multifunctional enzyme</keyword>
<keyword id="KW-1185">Reference proteome</keyword>
<keyword id="KW-0822">Tryptophan biosynthesis</keyword>
<reference key="1">
    <citation type="journal article" date="1995" name="Science">
        <title>Whole-genome random sequencing and assembly of Haemophilus influenzae Rd.</title>
        <authorList>
            <person name="Fleischmann R.D."/>
            <person name="Adams M.D."/>
            <person name="White O."/>
            <person name="Clayton R.A."/>
            <person name="Kirkness E.F."/>
            <person name="Kerlavage A.R."/>
            <person name="Bult C.J."/>
            <person name="Tomb J.-F."/>
            <person name="Dougherty B.A."/>
            <person name="Merrick J.M."/>
            <person name="McKenney K."/>
            <person name="Sutton G.G."/>
            <person name="FitzHugh W."/>
            <person name="Fields C.A."/>
            <person name="Gocayne J.D."/>
            <person name="Scott J.D."/>
            <person name="Shirley R."/>
            <person name="Liu L.-I."/>
            <person name="Glodek A."/>
            <person name="Kelley J.M."/>
            <person name="Weidman J.F."/>
            <person name="Phillips C.A."/>
            <person name="Spriggs T."/>
            <person name="Hedblom E."/>
            <person name="Cotton M.D."/>
            <person name="Utterback T.R."/>
            <person name="Hanna M.C."/>
            <person name="Nguyen D.T."/>
            <person name="Saudek D.M."/>
            <person name="Brandon R.C."/>
            <person name="Fine L.D."/>
            <person name="Fritchman J.L."/>
            <person name="Fuhrmann J.L."/>
            <person name="Geoghagen N.S.M."/>
            <person name="Gnehm C.L."/>
            <person name="McDonald L.A."/>
            <person name="Small K.V."/>
            <person name="Fraser C.M."/>
            <person name="Smith H.O."/>
            <person name="Venter J.C."/>
        </authorList>
    </citation>
    <scope>NUCLEOTIDE SEQUENCE [LARGE SCALE GENOMIC DNA]</scope>
    <source>
        <strain>ATCC 51907 / DSM 11121 / KW20 / Rd</strain>
    </source>
</reference>
<reference key="2">
    <citation type="submission" date="1995-09" db="UniProtKB">
        <authorList>
            <person name="Koonin E.V."/>
            <person name="Rudd K.E."/>
        </authorList>
    </citation>
    <scope>IDENTIFICATION</scope>
</reference>
<comment type="function">
    <text evidence="1">Bifunctional enzyme that catalyzes two sequential steps of tryptophan biosynthetic pathway. The first reaction is catalyzed by the isomerase, coded by the TrpF domain; the second reaction is catalyzed by the synthase, coded by the TrpC domain (By similarity).</text>
</comment>
<comment type="catalytic activity">
    <reaction>
        <text>N-(5-phospho-beta-D-ribosyl)anthranilate = 1-(2-carboxyphenylamino)-1-deoxy-D-ribulose 5-phosphate</text>
        <dbReference type="Rhea" id="RHEA:21540"/>
        <dbReference type="ChEBI" id="CHEBI:18277"/>
        <dbReference type="ChEBI" id="CHEBI:58613"/>
        <dbReference type="EC" id="5.3.1.24"/>
    </reaction>
</comment>
<comment type="catalytic activity">
    <reaction>
        <text>1-(2-carboxyphenylamino)-1-deoxy-D-ribulose 5-phosphate + H(+) = (1S,2R)-1-C-(indol-3-yl)glycerol 3-phosphate + CO2 + H2O</text>
        <dbReference type="Rhea" id="RHEA:23476"/>
        <dbReference type="ChEBI" id="CHEBI:15377"/>
        <dbReference type="ChEBI" id="CHEBI:15378"/>
        <dbReference type="ChEBI" id="CHEBI:16526"/>
        <dbReference type="ChEBI" id="CHEBI:58613"/>
        <dbReference type="ChEBI" id="CHEBI:58866"/>
        <dbReference type="EC" id="4.1.1.48"/>
    </reaction>
</comment>
<comment type="pathway">
    <text>Amino-acid biosynthesis; L-tryptophan biosynthesis; L-tryptophan from chorismate: step 3/5.</text>
</comment>
<comment type="pathway">
    <text>Amino-acid biosynthesis; L-tryptophan biosynthesis; L-tryptophan from chorismate: step 4/5.</text>
</comment>
<comment type="subunit">
    <text evidence="1">Monomer.</text>
</comment>
<comment type="similarity">
    <text evidence="2">In the N-terminal section; belongs to the TrpC family.</text>
</comment>
<comment type="similarity">
    <text evidence="2">In the C-terminal section; belongs to the TrpF family.</text>
</comment>